<organism>
    <name type="scientific">Rhizobium radiobacter</name>
    <name type="common">Agrobacterium tumefaciens</name>
    <name type="synonym">Agrobacterium radiobacter</name>
    <dbReference type="NCBI Taxonomy" id="358"/>
    <lineage>
        <taxon>Bacteria</taxon>
        <taxon>Pseudomonadati</taxon>
        <taxon>Pseudomonadota</taxon>
        <taxon>Alphaproteobacteria</taxon>
        <taxon>Hyphomicrobiales</taxon>
        <taxon>Rhizobiaceae</taxon>
        <taxon>Rhizobium/Agrobacterium group</taxon>
        <taxon>Agrobacterium</taxon>
        <taxon>Agrobacterium tumefaciens complex</taxon>
    </lineage>
</organism>
<proteinExistence type="inferred from homology"/>
<dbReference type="EC" id="2.7.13.3"/>
<dbReference type="EMBL" id="X05241">
    <property type="protein sequence ID" value="CAA28868.1"/>
    <property type="molecule type" value="Genomic_DNA"/>
</dbReference>
<dbReference type="PIR" id="A27211">
    <property type="entry name" value="A27211"/>
</dbReference>
<dbReference type="SMR" id="P07167"/>
<dbReference type="BRENDA" id="2.7.13.3">
    <property type="organism ID" value="200"/>
</dbReference>
<dbReference type="GO" id="GO:0005886">
    <property type="term" value="C:plasma membrane"/>
    <property type="evidence" value="ECO:0007669"/>
    <property type="project" value="UniProtKB-SubCell"/>
</dbReference>
<dbReference type="GO" id="GO:0005524">
    <property type="term" value="F:ATP binding"/>
    <property type="evidence" value="ECO:0007669"/>
    <property type="project" value="UniProtKB-KW"/>
</dbReference>
<dbReference type="GO" id="GO:0000155">
    <property type="term" value="F:phosphorelay sensor kinase activity"/>
    <property type="evidence" value="ECO:0007669"/>
    <property type="project" value="InterPro"/>
</dbReference>
<dbReference type="CDD" id="cd00082">
    <property type="entry name" value="HisKA"/>
    <property type="match status" value="1"/>
</dbReference>
<dbReference type="Gene3D" id="1.10.287.130">
    <property type="match status" value="1"/>
</dbReference>
<dbReference type="Gene3D" id="3.40.50.2300">
    <property type="match status" value="1"/>
</dbReference>
<dbReference type="Gene3D" id="3.30.565.10">
    <property type="entry name" value="Histidine kinase-like ATPase, C-terminal domain"/>
    <property type="match status" value="1"/>
</dbReference>
<dbReference type="InterPro" id="IPR011006">
    <property type="entry name" value="CheY-like_superfamily"/>
</dbReference>
<dbReference type="InterPro" id="IPR045812">
    <property type="entry name" value="DAHL"/>
</dbReference>
<dbReference type="InterPro" id="IPR036890">
    <property type="entry name" value="HATPase_C_sf"/>
</dbReference>
<dbReference type="InterPro" id="IPR005467">
    <property type="entry name" value="His_kinase_dom"/>
</dbReference>
<dbReference type="InterPro" id="IPR003661">
    <property type="entry name" value="HisK_dim/P_dom"/>
</dbReference>
<dbReference type="InterPro" id="IPR036097">
    <property type="entry name" value="HisK_dim/P_sf"/>
</dbReference>
<dbReference type="InterPro" id="IPR004358">
    <property type="entry name" value="Sig_transdc_His_kin-like_C"/>
</dbReference>
<dbReference type="InterPro" id="IPR001789">
    <property type="entry name" value="Sig_transdc_resp-reg_receiver"/>
</dbReference>
<dbReference type="NCBIfam" id="NF010411">
    <property type="entry name" value="PRK13837.1"/>
    <property type="match status" value="1"/>
</dbReference>
<dbReference type="PANTHER" id="PTHR43065">
    <property type="entry name" value="SENSOR HISTIDINE KINASE"/>
    <property type="match status" value="1"/>
</dbReference>
<dbReference type="PANTHER" id="PTHR43065:SF42">
    <property type="entry name" value="TWO-COMPONENT SENSOR PPRA"/>
    <property type="match status" value="1"/>
</dbReference>
<dbReference type="Pfam" id="PF19443">
    <property type="entry name" value="DAHL"/>
    <property type="match status" value="1"/>
</dbReference>
<dbReference type="Pfam" id="PF02518">
    <property type="entry name" value="HATPase_c"/>
    <property type="match status" value="1"/>
</dbReference>
<dbReference type="Pfam" id="PF00512">
    <property type="entry name" value="HisKA"/>
    <property type="match status" value="1"/>
</dbReference>
<dbReference type="PRINTS" id="PR00344">
    <property type="entry name" value="BCTRLSENSOR"/>
</dbReference>
<dbReference type="SMART" id="SM00387">
    <property type="entry name" value="HATPase_c"/>
    <property type="match status" value="1"/>
</dbReference>
<dbReference type="SMART" id="SM00388">
    <property type="entry name" value="HisKA"/>
    <property type="match status" value="1"/>
</dbReference>
<dbReference type="SUPFAM" id="SSF55874">
    <property type="entry name" value="ATPase domain of HSP90 chaperone/DNA topoisomerase II/histidine kinase"/>
    <property type="match status" value="1"/>
</dbReference>
<dbReference type="SUPFAM" id="SSF52172">
    <property type="entry name" value="CheY-like"/>
    <property type="match status" value="1"/>
</dbReference>
<dbReference type="SUPFAM" id="SSF47384">
    <property type="entry name" value="Homodimeric domain of signal transducing histidine kinase"/>
    <property type="match status" value="1"/>
</dbReference>
<dbReference type="PROSITE" id="PS50109">
    <property type="entry name" value="HIS_KIN"/>
    <property type="match status" value="1"/>
</dbReference>
<dbReference type="PROSITE" id="PS50110">
    <property type="entry name" value="RESPONSE_REGULATORY"/>
    <property type="match status" value="1"/>
</dbReference>
<geneLocation type="plasmid">
    <name>pTiA6</name>
</geneLocation>
<reference key="1">
    <citation type="journal article" date="1987" name="EMBO J.">
        <title>Characterization of the virA locus of Agrobacterium tumefaciens: a transcriptional regulator and host range determinant.</title>
        <authorList>
            <person name="Leroux B."/>
            <person name="Yanofsky M.F."/>
            <person name="Winans S.C."/>
            <person name="Ward J.E."/>
            <person name="Ziegler S.F."/>
            <person name="Nester E.W."/>
        </authorList>
    </citation>
    <scope>NUCLEOTIDE SEQUENCE [GENOMIC DNA]</scope>
    <source>
        <strain>A348</strain>
        <strain>A856</strain>
    </source>
</reference>
<sequence>MTWDRLLPSRKFLLAINSWYVLALVVAAISFAVLAIGPWKNEKSIEAILTELQSIDVDCALLQRNVLRAHAGLLRNYRPLMVPLGRVRSSIANLQQLFKKARVEDVGELSELLARLKSSINTTDAAVASFGAQNVVFEDSLATFNQSISSLLRTSDSRDLNAAKVPELGYLMLQFSFRPNTELALQITQSLDQLQMSTNADKVAIQEVVRNGRVILGVLPRLNETVKLVQASGTFENTKKLQRAYLEADSLARVVEQRVRTFLGAVSVFFCFGIVILVHKLRRRTDRLARRLDFEEVIKKIGVCFEDSTETKQSLKSSAEAALGTIENFFEANQCVLGLVNVTENEIAETFSASAPPPSWNERRIRKIVSLVQADEHGSIFRDYPARKASCFNEDAPGRWALVAFKVSDRLVAVFGLRFDRDPVQPASSEVQLMELAAGCVSHYVVIRCKQTQRDILERRLKHAERLEAVGTLAGGIAHEFNNILGVILGYAMAQNILHRRTYARHYIDRINAESNRARLIIDQILALSRRRERTARPFNLSALVREIAPSLRVALPSEVEVDFNIQSAQMIVEGNPLEIEQILMNLCKNAAEACIGTGRIEDSVYRSFVWKHKVLANGTIPAGDYILLSFEDNGGGIGQAALPHIFEPFFRTRAQCGGTGLGLSTVHGHVSAMAGFVDVISTVGRGTRFDIYLPTSAKKPVNSESFFGPEKIPLGSGEIVAVVEPDPVTLERYEETIAAFGYEPVGFNTFKGLTDWVLAGKEADIVLIDHSSFLDGERVGSWVATLEKVPIIMIGQHQKNVSISADGEASNHFLQKPVSSKALAYVVRANIRTE</sequence>
<feature type="chain" id="PRO_0000074894" description="Limited host range VirA protein">
    <location>
        <begin position="1"/>
        <end position="835"/>
    </location>
</feature>
<feature type="transmembrane region" description="Helical" evidence="1">
    <location>
        <begin position="19"/>
        <end position="39"/>
    </location>
</feature>
<feature type="transmembrane region" description="Helical" evidence="1">
    <location>
        <begin position="261"/>
        <end position="281"/>
    </location>
</feature>
<feature type="domain" description="Histidine kinase" evidence="2">
    <location>
        <begin position="476"/>
        <end position="698"/>
    </location>
</feature>
<feature type="domain" description="Response regulatory" evidence="3">
    <location>
        <begin position="720"/>
        <end position="832"/>
    </location>
</feature>
<feature type="modified residue" description="Phosphohistidine; by autocatalysis" evidence="2">
    <location>
        <position position="479"/>
    </location>
</feature>
<feature type="modified residue" description="4-aspartylphosphate" evidence="3">
    <location>
        <position position="770"/>
    </location>
</feature>
<protein>
    <recommendedName>
        <fullName>Limited host range VirA protein</fullName>
        <shortName>LHR VirA</shortName>
        <ecNumber>2.7.13.3</ecNumber>
    </recommendedName>
</protein>
<keyword id="KW-0067">ATP-binding</keyword>
<keyword id="KW-1003">Cell membrane</keyword>
<keyword id="KW-0192">Crown gall tumor</keyword>
<keyword id="KW-0418">Kinase</keyword>
<keyword id="KW-0472">Membrane</keyword>
<keyword id="KW-0547">Nucleotide-binding</keyword>
<keyword id="KW-0597">Phosphoprotein</keyword>
<keyword id="KW-0614">Plasmid</keyword>
<keyword id="KW-0808">Transferase</keyword>
<keyword id="KW-0812">Transmembrane</keyword>
<keyword id="KW-1133">Transmembrane helix</keyword>
<keyword id="KW-0902">Two-component regulatory system</keyword>
<gene>
    <name type="primary">virA</name>
</gene>
<evidence type="ECO:0000255" key="1"/>
<evidence type="ECO:0000255" key="2">
    <source>
        <dbReference type="PROSITE-ProRule" id="PRU00107"/>
    </source>
</evidence>
<evidence type="ECO:0000255" key="3">
    <source>
        <dbReference type="PROSITE-ProRule" id="PRU00169"/>
    </source>
</evidence>
<evidence type="ECO:0000305" key="4"/>
<comment type="catalytic activity">
    <reaction>
        <text>ATP + protein L-histidine = ADP + protein N-phospho-L-histidine.</text>
        <dbReference type="EC" id="2.7.13.3"/>
    </reaction>
</comment>
<comment type="subcellular location">
    <subcellularLocation>
        <location evidence="4">Cell membrane</location>
        <topology evidence="4">Multi-pass membrane protein</topology>
    </subcellularLocation>
</comment>
<name>VIRAL_RHIRD</name>
<accession>P07167</accession>